<organism>
    <name type="scientific">Streptomyces coelicolor (strain ATCC BAA-471 / A3(2) / M145)</name>
    <dbReference type="NCBI Taxonomy" id="100226"/>
    <lineage>
        <taxon>Bacteria</taxon>
        <taxon>Bacillati</taxon>
        <taxon>Actinomycetota</taxon>
        <taxon>Actinomycetes</taxon>
        <taxon>Kitasatosporales</taxon>
        <taxon>Streptomycetaceae</taxon>
        <taxon>Streptomyces</taxon>
        <taxon>Streptomyces albidoflavus group</taxon>
    </lineage>
</organism>
<sequence>MVAAAAATGILSLCGSPALADSHADGAATNSPGAVSGNALQVPVDVPVNACGNTVDVIAALNPAFGNECENASDEKTDGHGGGYGEDASSSSSSSTSASSSGSHADGATEGSPGVGSGNNAQVPVDVPVNLCGNTVDVIAALNPVFGNKCENDAEEPPGYGEEEPPPPTTPPGYGEEEPPPPTHEEPPPPSGEEEPPPPSEEEHTPPAPQTEQPPALAETGSEGTLGAAAAGAVLIAGGAILYRRGRALSGR</sequence>
<accession>Q8CJY7</accession>
<accession>Q8KVT6</accession>
<feature type="signal peptide" evidence="1">
    <location>
        <begin position="1"/>
        <end position="20"/>
    </location>
</feature>
<feature type="chain" id="PRO_5004304513" description="Chaplin-A" evidence="1">
    <location>
        <begin position="21"/>
        <end position="252"/>
    </location>
</feature>
<feature type="propeptide" id="PRO_0000445187" description="Removed by sortase" evidence="16">
    <location>
        <begin position="219"/>
        <end position="252"/>
    </location>
</feature>
<feature type="propeptide" id="PRO_0000445188" description="Removed by sortase" evidence="2 16">
    <location>
        <begin position="221"/>
        <end position="252"/>
    </location>
</feature>
<feature type="domain" description="Chaplin 1" evidence="3">
    <location>
        <begin position="31"/>
        <end position="71"/>
    </location>
</feature>
<feature type="domain" description="Chaplin 2" evidence="3">
    <location>
        <begin position="112"/>
        <end position="152"/>
    </location>
</feature>
<feature type="region of interest" description="Disordered" evidence="4">
    <location>
        <begin position="71"/>
        <end position="121"/>
    </location>
</feature>
<feature type="region of interest" description="Disordered" evidence="4">
    <location>
        <begin position="150"/>
        <end position="224"/>
    </location>
</feature>
<feature type="short sequence motif" description="LPXTG sorting signal" evidence="2 16">
    <location>
        <begin position="217"/>
        <end position="221"/>
    </location>
</feature>
<feature type="compositionally biased region" description="Low complexity" evidence="4">
    <location>
        <begin position="86"/>
        <end position="108"/>
    </location>
</feature>
<feature type="compositionally biased region" description="Acidic residues" evidence="4">
    <location>
        <begin position="153"/>
        <end position="165"/>
    </location>
</feature>
<feature type="compositionally biased region" description="Low complexity" evidence="4">
    <location>
        <begin position="210"/>
        <end position="224"/>
    </location>
</feature>
<feature type="modified residue" description="Pentaglycyl murein peptidoglycan amidated threonine" evidence="2 16">
    <location>
        <position position="220"/>
    </location>
</feature>
<reference key="1">
    <citation type="journal article" date="2002" name="Nature">
        <title>Complete genome sequence of the model actinomycete Streptomyces coelicolor A3(2).</title>
        <authorList>
            <person name="Bentley S.D."/>
            <person name="Chater K.F."/>
            <person name="Cerdeno-Tarraga A.-M."/>
            <person name="Challis G.L."/>
            <person name="Thomson N.R."/>
            <person name="James K.D."/>
            <person name="Harris D.E."/>
            <person name="Quail M.A."/>
            <person name="Kieser H."/>
            <person name="Harper D."/>
            <person name="Bateman A."/>
            <person name="Brown S."/>
            <person name="Chandra G."/>
            <person name="Chen C.W."/>
            <person name="Collins M."/>
            <person name="Cronin A."/>
            <person name="Fraser A."/>
            <person name="Goble A."/>
            <person name="Hidalgo J."/>
            <person name="Hornsby T."/>
            <person name="Howarth S."/>
            <person name="Huang C.-H."/>
            <person name="Kieser T."/>
            <person name="Larke L."/>
            <person name="Murphy L.D."/>
            <person name="Oliver K."/>
            <person name="O'Neil S."/>
            <person name="Rabbinowitsch E."/>
            <person name="Rajandream M.A."/>
            <person name="Rutherford K.M."/>
            <person name="Rutter S."/>
            <person name="Seeger K."/>
            <person name="Saunders D."/>
            <person name="Sharp S."/>
            <person name="Squares R."/>
            <person name="Squares S."/>
            <person name="Taylor K."/>
            <person name="Warren T."/>
            <person name="Wietzorrek A."/>
            <person name="Woodward J.R."/>
            <person name="Barrell B.G."/>
            <person name="Parkhill J."/>
            <person name="Hopwood D.A."/>
        </authorList>
    </citation>
    <scope>NUCLEOTIDE SEQUENCE [LARGE SCALE GENOMIC DNA]</scope>
    <source>
        <strain>ATCC BAA-471 / A3(2) / M145</strain>
    </source>
</reference>
<reference key="2">
    <citation type="journal article" date="2001" name="Genes Dev.">
        <title>Global analysis of growth phase responsive gene expression and regulation of antibiotic biosynthetic pathways in Streptomyces coelicolor using DNA microarrays.</title>
        <authorList>
            <person name="Huang J."/>
            <person name="Lih C.J."/>
            <person name="Pan K.H."/>
            <person name="Cohen S.N."/>
        </authorList>
    </citation>
    <scope>NUCLEOTIDE SEQUENCE [GENOMIC DNA] OF 8-247</scope>
    <scope>INDUCTION</scope>
    <source>
        <strain>ATCC BAA-471 / A3(2) / M145</strain>
    </source>
</reference>
<reference key="3">
    <citation type="journal article" date="2003" name="Genes Dev.">
        <title>A novel class of secreted hydrophobic proteins is involved in aerial hyphae formation in Streptomyces coelicolor by forming amyloid-like fibrils.</title>
        <authorList>
            <person name="Claessen D."/>
            <person name="Rink R."/>
            <person name="de Jong W."/>
            <person name="Siebring J."/>
            <person name="de Vreugd P."/>
            <person name="Boersma F.G."/>
            <person name="Dijkhuizen L."/>
            <person name="Wosten H.A."/>
        </authorList>
    </citation>
    <scope>FUNCTION</scope>
    <scope>INDUCTION</scope>
    <scope>DISRUPTION PHENOTYPE</scope>
    <source>
        <strain>ATCC BAA-471 / A3(2) / M145</strain>
    </source>
</reference>
<reference key="4">
    <citation type="journal article" date="2003" name="Genes Dev.">
        <title>The chaplins: a family of hydrophobic cell-surface proteins involved in aerial mycelium formation in Streptomyces coelicolor.</title>
        <authorList>
            <person name="Elliot M.A."/>
            <person name="Karoonuthaisiri N."/>
            <person name="Huang J."/>
            <person name="Bibb M.J."/>
            <person name="Cohen S.N."/>
            <person name="Kao C.M."/>
            <person name="Buttner M.J."/>
        </authorList>
    </citation>
    <scope>FUNCTION</scope>
    <scope>SUBCELLULAR LOCATION</scope>
    <scope>INDUCTION</scope>
    <scope>DISRUPTION PHENOTYPE</scope>
    <source>
        <strain>A3(2) / M600</strain>
    </source>
</reference>
<reference key="5">
    <citation type="journal article" date="2004" name="Mol. Microbiol.">
        <title>The formation of the rodlet layer of streptomycetes is the result of the interplay between rodlins and chaplins.</title>
        <authorList>
            <person name="Claessen D."/>
            <person name="Stokroos I."/>
            <person name="Deelstra H.J."/>
            <person name="Penninga N.A."/>
            <person name="Bormann C."/>
            <person name="Salas J.A."/>
            <person name="Dijkhuizen L."/>
            <person name="Woesten H.A."/>
        </authorList>
    </citation>
    <scope>FUNCTION</scope>
    <scope>DISRUPTION PHENOTYPE</scope>
    <source>
        <strain>ATCC BAA-471 / A3(2) / M145</strain>
    </source>
</reference>
<reference key="6">
    <citation type="journal article" date="2007" name="Mol. Microbiol.">
        <title>SapB and the chaplins: connections between morphogenetic proteins in Streptomyces coelicolor.</title>
        <authorList>
            <person name="Capstick D.S."/>
            <person name="Willey J.M."/>
            <person name="Buttner M.J."/>
            <person name="Elliot M.A."/>
        </authorList>
    </citation>
    <scope>FUNCTION</scope>
    <scope>DISRUPTION PHENOTYPE</scope>
    <source>
        <strain>A3(2) / M600</strain>
    </source>
</reference>
<reference key="7">
    <citation type="journal article" date="2008" name="J. Bacteriol.">
        <title>Function and redundancy of the chaplin cell surface proteins in aerial hypha formation, rodlet assembly, and viability in Streptomyces coelicolor.</title>
        <authorList>
            <person name="Di Berardo C."/>
            <person name="Capstick D.S."/>
            <person name="Bibb M.J."/>
            <person name="Findlay K.C."/>
            <person name="Buttner M.J."/>
            <person name="Elliot M.A."/>
        </authorList>
    </citation>
    <scope>FUNCTION</scope>
    <scope>CREATION OF A MINIMAL CHAPLIN STRAIN</scope>
    <source>
        <strain>A3(2) / M600</strain>
    </source>
</reference>
<reference key="8">
    <citation type="journal article" date="2009" name="Mol. Microbiol.">
        <title>Attachment of Streptomyces coelicolor is mediated by amyloidal fimbriae that are anchored to the cell surface via cellulose.</title>
        <authorList>
            <person name="de Jong W."/>
            <person name="Woesten H.A."/>
            <person name="Dijkhuizen L."/>
            <person name="Claessen D."/>
        </authorList>
    </citation>
    <scope>FUNCTION IN GROWTH SUBSTRATE ATTACHMENT</scope>
    <scope>DISRUPTION PHENOTYPE</scope>
    <source>
        <strain>ATCC BAA-471 / A3(2) / M145</strain>
    </source>
</reference>
<reference key="9">
    <citation type="journal article" date="2012" name="Mol. Microbiol.">
        <title>Aerial development in Streptomyces coelicolor requires sortase activity.</title>
        <authorList>
            <person name="Duong A."/>
            <person name="Capstick D.S."/>
            <person name="Di Berardo C."/>
            <person name="Findlay K.C."/>
            <person name="Hesketh A."/>
            <person name="Hong H.J."/>
            <person name="Elliot M.A."/>
        </authorList>
    </citation>
    <scope>FUNCTION</scope>
    <scope>SUBCELLULAR LOCATION</scope>
    <scope>DISRUPTION PHENOTYPE</scope>
    <source>
        <strain>A3(2) / M600</strain>
    </source>
</reference>
<keyword id="KW-0034">Amyloid</keyword>
<keyword id="KW-0130">Cell adhesion</keyword>
<keyword id="KW-0134">Cell wall</keyword>
<keyword id="KW-0572">Peptidoglycan-anchor</keyword>
<keyword id="KW-1185">Reference proteome</keyword>
<keyword id="KW-0677">Repeat</keyword>
<keyword id="KW-0964">Secreted</keyword>
<keyword id="KW-0732">Signal</keyword>
<protein>
    <recommendedName>
        <fullName evidence="14">Chaplin-A</fullName>
    </recommendedName>
</protein>
<dbReference type="EMBL" id="AL939113">
    <property type="protein sequence ID" value="CAD55200.1"/>
    <property type="molecule type" value="Genomic_DNA"/>
</dbReference>
<dbReference type="EMBL" id="AF425993">
    <property type="protein sequence ID" value="AAM78434.1"/>
    <property type="molecule type" value="Genomic_DNA"/>
</dbReference>
<dbReference type="RefSeq" id="NP_733581.1">
    <property type="nucleotide sequence ID" value="NC_003888.3"/>
</dbReference>
<dbReference type="STRING" id="100226.gene:17760323"/>
<dbReference type="PaxDb" id="100226-SCO2716"/>
<dbReference type="KEGG" id="sco:SCO2716"/>
<dbReference type="PATRIC" id="fig|100226.15.peg.2771"/>
<dbReference type="eggNOG" id="ENOG5033KAN">
    <property type="taxonomic scope" value="Bacteria"/>
</dbReference>
<dbReference type="HOGENOM" id="CLU_070271_0_0_11"/>
<dbReference type="InParanoid" id="Q8CJY7"/>
<dbReference type="OrthoDB" id="3544424at2"/>
<dbReference type="Proteomes" id="UP000001973">
    <property type="component" value="Chromosome"/>
</dbReference>
<dbReference type="GO" id="GO:0005576">
    <property type="term" value="C:extracellular region"/>
    <property type="evidence" value="ECO:0007669"/>
    <property type="project" value="UniProtKB-KW"/>
</dbReference>
<dbReference type="GO" id="GO:0007155">
    <property type="term" value="P:cell adhesion"/>
    <property type="evidence" value="ECO:0007669"/>
    <property type="project" value="UniProtKB-KW"/>
</dbReference>
<dbReference type="InterPro" id="IPR005528">
    <property type="entry name" value="ChpA-H"/>
</dbReference>
<dbReference type="InterPro" id="IPR019931">
    <property type="entry name" value="LPXTG_anchor"/>
</dbReference>
<dbReference type="NCBIfam" id="TIGR01167">
    <property type="entry name" value="LPXTG_anchor"/>
    <property type="match status" value="1"/>
</dbReference>
<dbReference type="Pfam" id="PF03777">
    <property type="entry name" value="ChpA-C"/>
    <property type="match status" value="2"/>
</dbReference>
<dbReference type="PROSITE" id="PS51884">
    <property type="entry name" value="CHAPLIN"/>
    <property type="match status" value="2"/>
</dbReference>
<dbReference type="PROSITE" id="PS50847">
    <property type="entry name" value="GRAM_POS_ANCHORING"/>
    <property type="match status" value="1"/>
</dbReference>
<name>CHPA_STRCO</name>
<evidence type="ECO:0000255" key="1"/>
<evidence type="ECO:0000255" key="2">
    <source>
        <dbReference type="PROSITE-ProRule" id="PRU00477"/>
    </source>
</evidence>
<evidence type="ECO:0000255" key="3">
    <source>
        <dbReference type="PROSITE-ProRule" id="PRU01232"/>
    </source>
</evidence>
<evidence type="ECO:0000256" key="4">
    <source>
        <dbReference type="SAM" id="MobiDB-lite"/>
    </source>
</evidence>
<evidence type="ECO:0000269" key="5">
    <source>
    </source>
</evidence>
<evidence type="ECO:0000269" key="6">
    <source>
    </source>
</evidence>
<evidence type="ECO:0000269" key="7">
    <source>
    </source>
</evidence>
<evidence type="ECO:0000269" key="8">
    <source>
    </source>
</evidence>
<evidence type="ECO:0000269" key="9">
    <source>
    </source>
</evidence>
<evidence type="ECO:0000269" key="10">
    <source>
    </source>
</evidence>
<evidence type="ECO:0000269" key="11">
    <source>
    </source>
</evidence>
<evidence type="ECO:0000269" key="12">
    <source>
    </source>
</evidence>
<evidence type="ECO:0000303" key="13">
    <source>
    </source>
</evidence>
<evidence type="ECO:0000303" key="14">
    <source>
    </source>
</evidence>
<evidence type="ECO:0000305" key="15">
    <source>
    </source>
</evidence>
<evidence type="ECO:0000305" key="16">
    <source>
    </source>
</evidence>
<gene>
    <name evidence="14" type="primary">chpA</name>
    <name evidence="13" type="synonym">ecrD</name>
    <name type="ordered locus">SCO2716</name>
</gene>
<proteinExistence type="evidence at protein level"/>
<comment type="function">
    <text evidence="6 7 8 9 10 11 12">One of 8 partially redundant surface-active proteins required for efficient formation of aerial mycelium; the short chaplins assemble into a hydrophobic, amyloidal fibrillar surface layer that envelopes and protects aerial hyphae and spores, presumably anchored to the long chaplins (PubMed:12832396, PubMed:12832397, PubMed:15228525, PubMed:17462011). Chaplins have an overlapping function with the surface-active SapB peptide; chaplins are essential on minimal medium while on rich medium both chaplins and SapB are required for efficient aerial hyphae formation (PubMed:17462011). A minimal chaplin strain capable of forming aerial mycelium/hyphae on minimal medium contains ChpC, ChpE and ChpH. The strain also has restored rodlet formation on the hyphae surface. A second minimal chaplin strain with ChpA, ChpD and ChpE makes slightly less robust hyphae (PubMed:18586935). The long chaplins (ChpA, ChpB, ChpC) are not absolutely necessary for short chaplin localization or rodlet formation, but probably play a role in initiating aerial hyphae development (PubMed:22296345). Chaplins are also involved in cell attachment to a hydrophobic surface (PubMed:19682261).</text>
</comment>
<comment type="subcellular location">
    <subcellularLocation>
        <location evidence="2 15 16">Secreted</location>
        <location evidence="2 15 16">Cell wall</location>
        <topology evidence="2 15 16">Peptidoglycan-anchor</topology>
    </subcellularLocation>
    <text evidence="16">Anchored to the cell wall by at least one of sortases SrtE1 and SrtE2.</text>
</comment>
<comment type="induction">
    <text evidence="5 6 7">Transcription is coordinated with that of the antibiotic undecylprodigiosin (Red) locus (PubMed:11731481). Transcribed during aerial hyphae formation on minimal medium, about 10- to 25-fold lower expression than the short chaplins. Weak expression in aerial hyphae (at protein level) (PubMed:12832396). Expressed during aerial hyphae formation and early sporulation on rich medium, under control of ECF sigma factor BldN (PubMed:12832397).</text>
</comment>
<comment type="disruption phenotype">
    <text evidence="6 7 8 9 11 12">A single chpA disruption and double chpA-chpD knockout have no phenotype; a quadruple chpA-chpC-chpD-chpH knockout has delayed aerial hyphae formation and sporulation. A quintuple chpA-chpB-chpC-chpD-chpH knockout has a longer delay in aerial hyphae formation and an almost complete lack of sporulation. The quintuple knockout still expresses ChpE, ChpF and ChpG (PubMed:12832397). Quintuple knockout chpA-chpB-chpC-chpD-chpH has strongly delayed aerial hyphae formation, makes many fewer aerial hyphae but no effect on viability of the spores produced. Further deletion of chpE leads to more severe effects, and on rich media few aerial hyphae are produced after prolonged growth. Those few hyphae do differentiate into spores and have a rodlet layer (PubMed:12832396). Deletion of all 8 chaplin genes on minimal medium leads to severely disrupted aerial hyphae that collapse on the colony surface and are not hydrophobic. A few spore chains can still be made, but they have neither rodlets or amyloid-like fibers. rdlA and rdlB mRNA are down-regulated (PubMed:15228525, PubMed:17462011). Deletion of all 8 chaplin genes on rich medium leads to a reduced abundance of aerial hyphae without rodlets and occasional spore chains on surface hyphae. A complete chaplin-negative plus ram-negative strain (deletion of ramR or the ramC-ramS-ramA-ramB operon) leads to the complete loss of robust aerial hyphae (PubMed:17462011). Deletion of the 3 long chaplins (ChpA, ChpB, ChpC) results in a 24 hour delay in aerial hyphae formation, while rodlets are about 1.5-fold longer than wild-type (PubMed:22296345). Deletion of all 8 chaplin genes significantly reduces cellular attachment to a hydrophobic substrate; thin fibrils instead of fimbrae are detected. The long chaplins (ChpA, ChpB and ChpC, as seen by near wild-type attachment of the hextuple chpA-chpB-chpC-chpD-chpE-chpH knockout) are not essential but may contribute to cellular attachment (PubMed:19682261).</text>
</comment>
<comment type="similarity">
    <text evidence="15">Belongs to the chaplin family. Long chaplin subfamily.</text>
</comment>